<keyword id="KW-0175">Coiled coil</keyword>
<keyword id="KW-0344">Guanine-nucleotide releasing factor</keyword>
<keyword id="KW-0597">Phosphoprotein</keyword>
<keyword id="KW-0653">Protein transport</keyword>
<keyword id="KW-1185">Reference proteome</keyword>
<keyword id="KW-0813">Transport</keyword>
<keyword id="KW-0843">Virulence</keyword>
<dbReference type="EMBL" id="AAHF01000002">
    <property type="protein sequence ID" value="EAL92925.1"/>
    <property type="molecule type" value="Genomic_DNA"/>
</dbReference>
<dbReference type="RefSeq" id="XP_754963.1">
    <property type="nucleotide sequence ID" value="XM_749870.1"/>
</dbReference>
<dbReference type="STRING" id="330879.Q4WWM8"/>
<dbReference type="EnsemblFungi" id="EAL92925">
    <property type="protein sequence ID" value="EAL92925"/>
    <property type="gene ID" value="AFUA_3G06430"/>
</dbReference>
<dbReference type="GeneID" id="3512501"/>
<dbReference type="KEGG" id="afm:AFUA_3G06430"/>
<dbReference type="eggNOG" id="KOG4324">
    <property type="taxonomic scope" value="Eukaryota"/>
</dbReference>
<dbReference type="HOGENOM" id="CLU_009486_2_0_1"/>
<dbReference type="InParanoid" id="Q4WWM8"/>
<dbReference type="OMA" id="CCEFTGY"/>
<dbReference type="OrthoDB" id="1748564at2759"/>
<dbReference type="Proteomes" id="UP000002530">
    <property type="component" value="Chromosome 3"/>
</dbReference>
<dbReference type="GO" id="GO:0051286">
    <property type="term" value="C:cell tip"/>
    <property type="evidence" value="ECO:0000318"/>
    <property type="project" value="GO_Central"/>
</dbReference>
<dbReference type="GO" id="GO:0005085">
    <property type="term" value="F:guanyl-nucleotide exchange factor activity"/>
    <property type="evidence" value="ECO:0000318"/>
    <property type="project" value="GO_Central"/>
</dbReference>
<dbReference type="CDD" id="cd06503">
    <property type="entry name" value="ATP-synt_Fo_b"/>
    <property type="match status" value="1"/>
</dbReference>
<dbReference type="CDD" id="cd21044">
    <property type="entry name" value="Rab11BD_RAB3IP_like"/>
    <property type="match status" value="1"/>
</dbReference>
<dbReference type="Gene3D" id="6.10.140.910">
    <property type="match status" value="1"/>
</dbReference>
<dbReference type="InterPro" id="IPR040351">
    <property type="entry name" value="RAB3IL/RAB3IP/Sec2"/>
</dbReference>
<dbReference type="InterPro" id="IPR009449">
    <property type="entry name" value="Sec2_N"/>
</dbReference>
<dbReference type="PANTHER" id="PTHR14430">
    <property type="entry name" value="RABIN3-RELATED"/>
    <property type="match status" value="1"/>
</dbReference>
<dbReference type="PANTHER" id="PTHR14430:SF0">
    <property type="entry name" value="SEC2P DOMAIN-CONTAINING PROTEIN"/>
    <property type="match status" value="1"/>
</dbReference>
<dbReference type="Pfam" id="PF06428">
    <property type="entry name" value="Sec2p"/>
    <property type="match status" value="1"/>
</dbReference>
<dbReference type="SUPFAM" id="SSF144284">
    <property type="entry name" value="Sec2 N-terminal region"/>
    <property type="match status" value="1"/>
</dbReference>
<feature type="chain" id="PRO_0000462302" description="Rab guanine nucleotide exchange factor sec2">
    <location>
        <begin position="1"/>
        <end position="705"/>
    </location>
</feature>
<feature type="coiled-coil region" evidence="1">
    <location>
        <begin position="144"/>
        <end position="285"/>
    </location>
</feature>
<protein>
    <recommendedName>
        <fullName evidence="3">Rab guanine nucleotide exchange factor sec2</fullName>
    </recommendedName>
</protein>
<accession>Q4WWM8</accession>
<evidence type="ECO:0000255" key="1"/>
<evidence type="ECO:0000269" key="2">
    <source>
    </source>
</evidence>
<evidence type="ECO:0000303" key="3">
    <source>
    </source>
</evidence>
<evidence type="ECO:0000305" key="4"/>
<comment type="function">
    <text evidence="2">Guanine nucleotide exchange factor that plays an important role in regulating the growth and virulence, probably by regulating the autophagy pathway (PubMed:39852455). Affects the sensitivity to cell wall disruptors and the cell wall thickness by regulating the expression levels of the cell wall integrity (CWI) pathway genes, thus coordinating the growth and virulence (PubMed:39852455). Positively regulates the autophagy pathway to enhance the expression of CWI pathway genes in the presence of autophagy inducers (PubMed:39852455).</text>
</comment>
<comment type="disruption phenotype">
    <text evidence="2">Leads to slower growth and reduces the fungal burden and mortality of infected mice (PubMed:39852455). Significlantly up-regulates the expression of atg1 and atg12 and accumulates more autophagosomes (PubMed:39852455). Leads to down-regulation of CWI pathway genes including the chitin synthase genes chsB and chsC, the alpha-1,3-glucan synthase genes ags1 and ags3, the beta-1,3-glucan synthase gene fksA, and 1-3-beta-glucan glucosyltransferase gene gel1; but not chsA, chsG and gel2 (PubMed:39852455).</text>
</comment>
<comment type="similarity">
    <text evidence="4">Belongs to the SEC2 family.</text>
</comment>
<reference key="1">
    <citation type="journal article" date="2005" name="Nature">
        <title>Genomic sequence of the pathogenic and allergenic filamentous fungus Aspergillus fumigatus.</title>
        <authorList>
            <person name="Nierman W.C."/>
            <person name="Pain A."/>
            <person name="Anderson M.J."/>
            <person name="Wortman J.R."/>
            <person name="Kim H.S."/>
            <person name="Arroyo J."/>
            <person name="Berriman M."/>
            <person name="Abe K."/>
            <person name="Archer D.B."/>
            <person name="Bermejo C."/>
            <person name="Bennett J.W."/>
            <person name="Bowyer P."/>
            <person name="Chen D."/>
            <person name="Collins M."/>
            <person name="Coulsen R."/>
            <person name="Davies R."/>
            <person name="Dyer P.S."/>
            <person name="Farman M.L."/>
            <person name="Fedorova N."/>
            <person name="Fedorova N.D."/>
            <person name="Feldblyum T.V."/>
            <person name="Fischer R."/>
            <person name="Fosker N."/>
            <person name="Fraser A."/>
            <person name="Garcia J.L."/>
            <person name="Garcia M.J."/>
            <person name="Goble A."/>
            <person name="Goldman G.H."/>
            <person name="Gomi K."/>
            <person name="Griffith-Jones S."/>
            <person name="Gwilliam R."/>
            <person name="Haas B.J."/>
            <person name="Haas H."/>
            <person name="Harris D.E."/>
            <person name="Horiuchi H."/>
            <person name="Huang J."/>
            <person name="Humphray S."/>
            <person name="Jimenez J."/>
            <person name="Keller N."/>
            <person name="Khouri H."/>
            <person name="Kitamoto K."/>
            <person name="Kobayashi T."/>
            <person name="Konzack S."/>
            <person name="Kulkarni R."/>
            <person name="Kumagai T."/>
            <person name="Lafton A."/>
            <person name="Latge J.-P."/>
            <person name="Li W."/>
            <person name="Lord A."/>
            <person name="Lu C."/>
            <person name="Majoros W.H."/>
            <person name="May G.S."/>
            <person name="Miller B.L."/>
            <person name="Mohamoud Y."/>
            <person name="Molina M."/>
            <person name="Monod M."/>
            <person name="Mouyna I."/>
            <person name="Mulligan S."/>
            <person name="Murphy L.D."/>
            <person name="O'Neil S."/>
            <person name="Paulsen I."/>
            <person name="Penalva M.A."/>
            <person name="Pertea M."/>
            <person name="Price C."/>
            <person name="Pritchard B.L."/>
            <person name="Quail M.A."/>
            <person name="Rabbinowitsch E."/>
            <person name="Rawlins N."/>
            <person name="Rajandream M.A."/>
            <person name="Reichard U."/>
            <person name="Renauld H."/>
            <person name="Robson G.D."/>
            <person name="Rodriguez de Cordoba S."/>
            <person name="Rodriguez-Pena J.M."/>
            <person name="Ronning C.M."/>
            <person name="Rutter S."/>
            <person name="Salzberg S.L."/>
            <person name="Sanchez M."/>
            <person name="Sanchez-Ferrero J.C."/>
            <person name="Saunders D."/>
            <person name="Seeger K."/>
            <person name="Squares R."/>
            <person name="Squares S."/>
            <person name="Takeuchi M."/>
            <person name="Tekaia F."/>
            <person name="Turner G."/>
            <person name="Vazquez de Aldana C.R."/>
            <person name="Weidman J."/>
            <person name="White O."/>
            <person name="Woodward J.R."/>
            <person name="Yu J.-H."/>
            <person name="Fraser C.M."/>
            <person name="Galagan J.E."/>
            <person name="Asai K."/>
            <person name="Machida M."/>
            <person name="Hall N."/>
            <person name="Barrell B.G."/>
            <person name="Denning D.W."/>
        </authorList>
    </citation>
    <scope>NUCLEOTIDE SEQUENCE [LARGE SCALE GENOMIC DNA]</scope>
    <source>
        <strain>ATCC MYA-4609 / CBS 101355 / FGSC A1100 / Af293</strain>
    </source>
</reference>
<reference key="2">
    <citation type="journal article" date="2025" name="J. Fungi">
        <title>Roles of the Sec2p Gene in the Growth and Pathogenicity Regulation of Aspergillus fumigatus.</title>
        <authorList>
            <person name="Liu Y."/>
            <person name="Shang S."/>
            <person name="Liu C."/>
            <person name="Liu Y."/>
            <person name="Xu K."/>
            <person name="He D."/>
            <person name="Wang L."/>
        </authorList>
    </citation>
    <scope>FUNCTION</scope>
    <scope>DISRUPTION PHENOTYPE</scope>
</reference>
<name>SEC2_ASPFU</name>
<proteinExistence type="inferred from homology"/>
<organism>
    <name type="scientific">Aspergillus fumigatus (strain ATCC MYA-4609 / CBS 101355 / FGSC A1100 / Af293)</name>
    <name type="common">Neosartorya fumigata</name>
    <dbReference type="NCBI Taxonomy" id="330879"/>
    <lineage>
        <taxon>Eukaryota</taxon>
        <taxon>Fungi</taxon>
        <taxon>Dikarya</taxon>
        <taxon>Ascomycota</taxon>
        <taxon>Pezizomycotina</taxon>
        <taxon>Eurotiomycetes</taxon>
        <taxon>Eurotiomycetidae</taxon>
        <taxon>Eurotiales</taxon>
        <taxon>Aspergillaceae</taxon>
        <taxon>Aspergillus</taxon>
        <taxon>Aspergillus subgen. Fumigati</taxon>
    </lineage>
</organism>
<gene>
    <name evidence="3" type="primary">sec2</name>
    <name type="ORF">AFUA_3G06430</name>
</gene>
<sequence>MCPLPHANLSMVTNEVTNFMSSLIAFQTYHLRHSFLSPSNMIPRSSNHKRSLSSGPRSLSPDRTVTKTKSTNDLAATATEKPSLATRSNSAGDIPDSGFSTLRDPRLVNNSEASDTSSTPSHHPDLSSEVAALSVKLIQAINNQTTLDDNLVATRQELEQAQNRIKSLESENEKYRHDIEQAVLIKKADADREISQLKAALAEEKAQRAIVEKSKKTIEQELETLTAALFEEANKMVAAAKLEREAVEKKNEQLRAQVKDTELLLASHQEQLAELKSVMQGMNIAKDDVEVRTTISTVPSSPDGHQQLPGIFPRSLETADPPEQSPHVEEIVPGPSTSFPHLFKSVCRTDIQAFEDFRELFSLSSASKPPSRAASGSYAGLNVMSLANFSSAGFGSASSSPAKSTHSPNGSMSSPQPATSHIPLKETRFYKRVLMEDIEPTLRLDAAPGISWLTRRAVLSSICEGSLVVEPIPPATRKYGFPCSLCGDRRPGSANERTHRFRTSDSDTAQRYPLCVLCLEKVRSSCEFTGYLRLILDGHVRAADAEEEKDAWEETVRLRERMFWSRIGGGVVPTFAQANSFENAGSAPSRHNLGDRIGDDEQDRLDAPLETYETPNHGHDHGVSDSDYDNASVSGYTSASGVSRPFYGSPKSHASEKGKDEYLEHGVSQVTLSATSDDPKSITHVEESLVIRTAKNDDGHDDDQN</sequence>